<dbReference type="EC" id="6.3.2.7" evidence="1"/>
<dbReference type="EMBL" id="CP000407">
    <property type="protein sequence ID" value="ABP89617.1"/>
    <property type="molecule type" value="Genomic_DNA"/>
</dbReference>
<dbReference type="SMR" id="A4VU28"/>
<dbReference type="STRING" id="391295.SSU05_0651"/>
<dbReference type="KEGG" id="ssu:SSU05_0651"/>
<dbReference type="eggNOG" id="COG0769">
    <property type="taxonomic scope" value="Bacteria"/>
</dbReference>
<dbReference type="HOGENOM" id="CLU_022291_4_2_9"/>
<dbReference type="UniPathway" id="UPA00219"/>
<dbReference type="GO" id="GO:0005737">
    <property type="term" value="C:cytoplasm"/>
    <property type="evidence" value="ECO:0007669"/>
    <property type="project" value="UniProtKB-SubCell"/>
</dbReference>
<dbReference type="GO" id="GO:0005524">
    <property type="term" value="F:ATP binding"/>
    <property type="evidence" value="ECO:0007669"/>
    <property type="project" value="UniProtKB-UniRule"/>
</dbReference>
<dbReference type="GO" id="GO:0000287">
    <property type="term" value="F:magnesium ion binding"/>
    <property type="evidence" value="ECO:0007669"/>
    <property type="project" value="UniProtKB-UniRule"/>
</dbReference>
<dbReference type="GO" id="GO:0047482">
    <property type="term" value="F:UDP-N-acetylmuramoyl-L-alanyl-D-glutamate-L-lysine ligase activity"/>
    <property type="evidence" value="ECO:0007669"/>
    <property type="project" value="UniProtKB-UniRule"/>
</dbReference>
<dbReference type="GO" id="GO:0051301">
    <property type="term" value="P:cell division"/>
    <property type="evidence" value="ECO:0007669"/>
    <property type="project" value="UniProtKB-KW"/>
</dbReference>
<dbReference type="GO" id="GO:0071555">
    <property type="term" value="P:cell wall organization"/>
    <property type="evidence" value="ECO:0007669"/>
    <property type="project" value="UniProtKB-KW"/>
</dbReference>
<dbReference type="GO" id="GO:0009252">
    <property type="term" value="P:peptidoglycan biosynthetic process"/>
    <property type="evidence" value="ECO:0007669"/>
    <property type="project" value="UniProtKB-UniRule"/>
</dbReference>
<dbReference type="GO" id="GO:0008360">
    <property type="term" value="P:regulation of cell shape"/>
    <property type="evidence" value="ECO:0007669"/>
    <property type="project" value="UniProtKB-KW"/>
</dbReference>
<dbReference type="Gene3D" id="3.90.190.20">
    <property type="entry name" value="Mur ligase, C-terminal domain"/>
    <property type="match status" value="1"/>
</dbReference>
<dbReference type="Gene3D" id="3.40.1190.10">
    <property type="entry name" value="Mur-like, catalytic domain"/>
    <property type="match status" value="1"/>
</dbReference>
<dbReference type="Gene3D" id="3.40.1390.10">
    <property type="entry name" value="MurE/MurF, N-terminal domain"/>
    <property type="match status" value="1"/>
</dbReference>
<dbReference type="HAMAP" id="MF_00208">
    <property type="entry name" value="MurE"/>
    <property type="match status" value="1"/>
</dbReference>
<dbReference type="InterPro" id="IPR036565">
    <property type="entry name" value="Mur-like_cat_sf"/>
</dbReference>
<dbReference type="InterPro" id="IPR004101">
    <property type="entry name" value="Mur_ligase_C"/>
</dbReference>
<dbReference type="InterPro" id="IPR036615">
    <property type="entry name" value="Mur_ligase_C_dom_sf"/>
</dbReference>
<dbReference type="InterPro" id="IPR013221">
    <property type="entry name" value="Mur_ligase_cen"/>
</dbReference>
<dbReference type="InterPro" id="IPR035911">
    <property type="entry name" value="MurE/MurF_N"/>
</dbReference>
<dbReference type="InterPro" id="IPR005761">
    <property type="entry name" value="UDP-N-AcMur-Glu-dNH2Pim_ligase"/>
</dbReference>
<dbReference type="NCBIfam" id="TIGR01085">
    <property type="entry name" value="murE"/>
    <property type="match status" value="1"/>
</dbReference>
<dbReference type="NCBIfam" id="NF010628">
    <property type="entry name" value="PRK14022.1"/>
    <property type="match status" value="1"/>
</dbReference>
<dbReference type="PANTHER" id="PTHR23135">
    <property type="entry name" value="MUR LIGASE FAMILY MEMBER"/>
    <property type="match status" value="1"/>
</dbReference>
<dbReference type="PANTHER" id="PTHR23135:SF4">
    <property type="entry name" value="UDP-N-ACETYLMURAMOYL-L-ALANYL-D-GLUTAMATE--2,6-DIAMINOPIMELATE LIGASE MURE HOMOLOG, CHLOROPLASTIC"/>
    <property type="match status" value="1"/>
</dbReference>
<dbReference type="Pfam" id="PF02875">
    <property type="entry name" value="Mur_ligase_C"/>
    <property type="match status" value="1"/>
</dbReference>
<dbReference type="Pfam" id="PF08245">
    <property type="entry name" value="Mur_ligase_M"/>
    <property type="match status" value="1"/>
</dbReference>
<dbReference type="SUPFAM" id="SSF53623">
    <property type="entry name" value="MurD-like peptide ligases, catalytic domain"/>
    <property type="match status" value="1"/>
</dbReference>
<dbReference type="SUPFAM" id="SSF53244">
    <property type="entry name" value="MurD-like peptide ligases, peptide-binding domain"/>
    <property type="match status" value="1"/>
</dbReference>
<dbReference type="SUPFAM" id="SSF63418">
    <property type="entry name" value="MurE/MurF N-terminal domain"/>
    <property type="match status" value="1"/>
</dbReference>
<name>MURE_STRSY</name>
<feature type="chain" id="PRO_1000012394" description="UDP-N-acetylmuramoyl-L-alanyl-D-glutamate--L-lysine ligase">
    <location>
        <begin position="1"/>
        <end position="481"/>
    </location>
</feature>
<feature type="short sequence motif" description="L-lysine recognition motif">
    <location>
        <begin position="404"/>
        <end position="407"/>
    </location>
</feature>
<feature type="binding site" evidence="1">
    <location>
        <position position="42"/>
    </location>
    <ligand>
        <name>UDP-N-acetyl-alpha-D-muramoyl-L-alanyl-D-glutamate</name>
        <dbReference type="ChEBI" id="CHEBI:83900"/>
    </ligand>
</feature>
<feature type="binding site" evidence="1">
    <location>
        <begin position="118"/>
        <end position="124"/>
    </location>
    <ligand>
        <name>ATP</name>
        <dbReference type="ChEBI" id="CHEBI:30616"/>
    </ligand>
</feature>
<feature type="binding site" evidence="1">
    <location>
        <begin position="160"/>
        <end position="161"/>
    </location>
    <ligand>
        <name>UDP-N-acetyl-alpha-D-muramoyl-L-alanyl-D-glutamate</name>
        <dbReference type="ChEBI" id="CHEBI:83900"/>
    </ligand>
</feature>
<feature type="binding site" evidence="1">
    <location>
        <position position="187"/>
    </location>
    <ligand>
        <name>UDP-N-acetyl-alpha-D-muramoyl-L-alanyl-D-glutamate</name>
        <dbReference type="ChEBI" id="CHEBI:83900"/>
    </ligand>
</feature>
<feature type="binding site" evidence="1">
    <location>
        <position position="195"/>
    </location>
    <ligand>
        <name>UDP-N-acetyl-alpha-D-muramoyl-L-alanyl-D-glutamate</name>
        <dbReference type="ChEBI" id="CHEBI:83900"/>
    </ligand>
</feature>
<feature type="modified residue" description="N6-carboxylysine" evidence="1">
    <location>
        <position position="229"/>
    </location>
</feature>
<organism>
    <name type="scientific">Streptococcus suis (strain 05ZYH33)</name>
    <dbReference type="NCBI Taxonomy" id="391295"/>
    <lineage>
        <taxon>Bacteria</taxon>
        <taxon>Bacillati</taxon>
        <taxon>Bacillota</taxon>
        <taxon>Bacilli</taxon>
        <taxon>Lactobacillales</taxon>
        <taxon>Streptococcaceae</taxon>
        <taxon>Streptococcus</taxon>
    </lineage>
</organism>
<evidence type="ECO:0000255" key="1">
    <source>
        <dbReference type="HAMAP-Rule" id="MF_00208"/>
    </source>
</evidence>
<gene>
    <name evidence="1" type="primary">murE</name>
    <name type="ordered locus">SSU05_0651</name>
</gene>
<comment type="function">
    <text evidence="1">Catalyzes the addition of L-lysine to the nucleotide precursor UDP-N-acetylmuramoyl-L-alanyl-D-glutamate (UMAG) in the biosynthesis of bacterial cell-wall peptidoglycan.</text>
</comment>
<comment type="catalytic activity">
    <reaction evidence="1">
        <text>UDP-N-acetyl-alpha-D-muramoyl-L-alanyl-D-glutamate + L-lysine + ATP = UDP-N-acetyl-alpha-D-muramoyl-L-alanyl-gamma-D-glutamyl-L-lysine + ADP + phosphate + H(+)</text>
        <dbReference type="Rhea" id="RHEA:17969"/>
        <dbReference type="ChEBI" id="CHEBI:15378"/>
        <dbReference type="ChEBI" id="CHEBI:30616"/>
        <dbReference type="ChEBI" id="CHEBI:32551"/>
        <dbReference type="ChEBI" id="CHEBI:43474"/>
        <dbReference type="ChEBI" id="CHEBI:83900"/>
        <dbReference type="ChEBI" id="CHEBI:83903"/>
        <dbReference type="ChEBI" id="CHEBI:456216"/>
        <dbReference type="EC" id="6.3.2.7"/>
    </reaction>
</comment>
<comment type="pathway">
    <text evidence="1">Cell wall biogenesis; peptidoglycan biosynthesis.</text>
</comment>
<comment type="subcellular location">
    <subcellularLocation>
        <location evidence="1">Cytoplasm</location>
    </subcellularLocation>
</comment>
<comment type="PTM">
    <text evidence="1">Carboxylation is probably crucial for Mg(2+) binding and, consequently, for the gamma-phosphate positioning of ATP.</text>
</comment>
<comment type="similarity">
    <text evidence="1">Belongs to the MurCDEF family. MurE subfamily.</text>
</comment>
<accession>A4VU28</accession>
<protein>
    <recommendedName>
        <fullName evidence="1">UDP-N-acetylmuramoyl-L-alanyl-D-glutamate--L-lysine ligase</fullName>
        <ecNumber evidence="1">6.3.2.7</ecNumber>
    </recommendedName>
    <alternativeName>
        <fullName evidence="1">L-lysine-adding enzyme</fullName>
    </alternativeName>
    <alternativeName>
        <fullName evidence="1">UDP-MurNAc-L-Ala-D-Glu:L-Lys ligase</fullName>
    </alternativeName>
    <alternativeName>
        <fullName evidence="1">UDP-MurNAc-tripeptide synthetase</fullName>
    </alternativeName>
    <alternativeName>
        <fullName evidence="1">UDP-N-acetylmuramyl-tripeptide synthetase</fullName>
    </alternativeName>
</protein>
<sequence length="481" mass="53210">MITIERVLEILKADANFRHIKQNDQTDSTWTDVQFDALSYDSRTVSPMTLFFAKGLAFKKEFLEKAIEAGLAFYVSEINYEVGIPAIIVHDIKQAMSLIAMEFHGHPQKQLKLLAFTGTKGKTTAAYFAFNILKQSKKPAMLSTMNTTLDGKTFFKSTLTTPESLDLFAMMAEAVKNGMTHLIMEVSSQAYLVKRVYGLTFDVGVFLNISPDHIGPIEHPTFEDYFYHKRLLMDNSRAVIVNAGMDHFEVVKEQVSSKDHDFYGPTSENQISQSAGFDFTATGKLAGHYDIQLIGGFNQENAIAAGLACLRLGASLEDIHTGIAQTNVPGRMEVLTQQNGAKVFVDYAHNGDSVKKLIDVVLEHQTGKVFLILGAPGNKGESRRKDFGLLLNDYPQIEVILTADDPNREDPAAIAEQIRAHMTRTSNFILDREEAIRTAMSQTSSPKDAVIIAGKGADAYQIVNGEKAAYDGDLEVAKQYL</sequence>
<keyword id="KW-0067">ATP-binding</keyword>
<keyword id="KW-0131">Cell cycle</keyword>
<keyword id="KW-0132">Cell division</keyword>
<keyword id="KW-0133">Cell shape</keyword>
<keyword id="KW-0961">Cell wall biogenesis/degradation</keyword>
<keyword id="KW-0963">Cytoplasm</keyword>
<keyword id="KW-0436">Ligase</keyword>
<keyword id="KW-0547">Nucleotide-binding</keyword>
<keyword id="KW-0573">Peptidoglycan synthesis</keyword>
<reference key="1">
    <citation type="journal article" date="2007" name="PLoS ONE">
        <title>A glimpse of streptococcal toxic shock syndrome from comparative genomics of S. suis 2 Chinese isolates.</title>
        <authorList>
            <person name="Chen C."/>
            <person name="Tang J."/>
            <person name="Dong W."/>
            <person name="Wang C."/>
            <person name="Feng Y."/>
            <person name="Wang J."/>
            <person name="Zheng F."/>
            <person name="Pan X."/>
            <person name="Liu D."/>
            <person name="Li M."/>
            <person name="Song Y."/>
            <person name="Zhu X."/>
            <person name="Sun H."/>
            <person name="Feng T."/>
            <person name="Guo Z."/>
            <person name="Ju A."/>
            <person name="Ge J."/>
            <person name="Dong Y."/>
            <person name="Sun W."/>
            <person name="Jiang Y."/>
            <person name="Wang J."/>
            <person name="Yan J."/>
            <person name="Yang H."/>
            <person name="Wang X."/>
            <person name="Gao G.F."/>
            <person name="Yang R."/>
            <person name="Wang J."/>
            <person name="Yu J."/>
        </authorList>
    </citation>
    <scope>NUCLEOTIDE SEQUENCE [LARGE SCALE GENOMIC DNA]</scope>
    <source>
        <strain>05ZYH33</strain>
    </source>
</reference>
<proteinExistence type="inferred from homology"/>